<feature type="signal peptide" evidence="1">
    <location>
        <begin position="1"/>
        <end position="25"/>
    </location>
</feature>
<feature type="chain" id="PRO_0000380567" description="Lipopolysaccharide core heptose(II)-phosphate phosphatase">
    <location>
        <begin position="26"/>
        <end position="200"/>
    </location>
</feature>
<organism>
    <name type="scientific">Escherichia coli O6:H1 (strain CFT073 / ATCC 700928 / UPEC)</name>
    <dbReference type="NCBI Taxonomy" id="199310"/>
    <lineage>
        <taxon>Bacteria</taxon>
        <taxon>Pseudomonadati</taxon>
        <taxon>Pseudomonadota</taxon>
        <taxon>Gammaproteobacteria</taxon>
        <taxon>Enterobacterales</taxon>
        <taxon>Enterobacteriaceae</taxon>
        <taxon>Escherichia</taxon>
    </lineage>
</organism>
<sequence>MLAFCRSSLKSKKYFIILLALAAIAGLGTHAAWSSNGLPRIDNKTLARLAQQHPVVVLFRHAERCDRSTNQCLSDKTGITVKGTQDARELGNAFSADIPDFDLYSSNTVRTIQSATWFSAGKKLTVDKRFLQCGNEIYSAIKDLQRKAPDKNIVIFTHNHCLTYIAKDKRDATFKPDYLDGLVMHVEKGKVYLDGEFVNH</sequence>
<comment type="function">
    <text evidence="1">Catalyzes the dephosphorylation of heptose(II) of the outer membrane lipopolysaccharide core.</text>
</comment>
<comment type="pathway">
    <text evidence="1">Bacterial outer membrane biogenesis; lipopolysaccharide metabolism.</text>
</comment>
<comment type="subcellular location">
    <subcellularLocation>
        <location evidence="1">Periplasm</location>
    </subcellularLocation>
</comment>
<comment type="similarity">
    <text evidence="1">Belongs to the phosphoglycerate mutase family. Ais subfamily.</text>
</comment>
<comment type="sequence caution" evidence="2">
    <conflict type="erroneous initiation">
        <sequence resource="EMBL-CDS" id="AAN81248"/>
    </conflict>
</comment>
<reference key="1">
    <citation type="journal article" date="2002" name="Proc. Natl. Acad. Sci. U.S.A.">
        <title>Extensive mosaic structure revealed by the complete genome sequence of uropathogenic Escherichia coli.</title>
        <authorList>
            <person name="Welch R.A."/>
            <person name="Burland V."/>
            <person name="Plunkett G. III"/>
            <person name="Redford P."/>
            <person name="Roesch P."/>
            <person name="Rasko D."/>
            <person name="Buckles E.L."/>
            <person name="Liou S.-R."/>
            <person name="Boutin A."/>
            <person name="Hackett J."/>
            <person name="Stroud D."/>
            <person name="Mayhew G.F."/>
            <person name="Rose D.J."/>
            <person name="Zhou S."/>
            <person name="Schwartz D.C."/>
            <person name="Perna N.T."/>
            <person name="Mobley H.L.T."/>
            <person name="Donnenberg M.S."/>
            <person name="Blattner F.R."/>
        </authorList>
    </citation>
    <scope>NUCLEOTIDE SEQUENCE [LARGE SCALE GENOMIC DNA]</scope>
    <source>
        <strain>CFT073 / ATCC 700928 / UPEC</strain>
    </source>
</reference>
<gene>
    <name evidence="1" type="primary">ais</name>
    <name type="ordered locus">c2794</name>
</gene>
<protein>
    <recommendedName>
        <fullName evidence="1">Lipopolysaccharide core heptose(II)-phosphate phosphatase</fullName>
        <ecNumber evidence="1">3.1.3.-</ecNumber>
    </recommendedName>
</protein>
<evidence type="ECO:0000255" key="1">
    <source>
        <dbReference type="HAMAP-Rule" id="MF_01868"/>
    </source>
</evidence>
<evidence type="ECO:0000305" key="2"/>
<accession>Q8FFM4</accession>
<dbReference type="EC" id="3.1.3.-" evidence="1"/>
<dbReference type="EMBL" id="AE014075">
    <property type="protein sequence ID" value="AAN81248.1"/>
    <property type="status" value="ALT_INIT"/>
    <property type="molecule type" value="Genomic_DNA"/>
</dbReference>
<dbReference type="RefSeq" id="WP_000879110.1">
    <property type="nucleotide sequence ID" value="NZ_CP051263.1"/>
</dbReference>
<dbReference type="SMR" id="Q8FFM4"/>
<dbReference type="STRING" id="199310.c2794"/>
<dbReference type="KEGG" id="ecc:c2794"/>
<dbReference type="eggNOG" id="COG0406">
    <property type="taxonomic scope" value="Bacteria"/>
</dbReference>
<dbReference type="HOGENOM" id="CLU_106705_1_0_6"/>
<dbReference type="UniPathway" id="UPA00451"/>
<dbReference type="Proteomes" id="UP000001410">
    <property type="component" value="Chromosome"/>
</dbReference>
<dbReference type="GO" id="GO:0042597">
    <property type="term" value="C:periplasmic space"/>
    <property type="evidence" value="ECO:0007669"/>
    <property type="project" value="UniProtKB-SubCell"/>
</dbReference>
<dbReference type="GO" id="GO:0016791">
    <property type="term" value="F:phosphatase activity"/>
    <property type="evidence" value="ECO:0007669"/>
    <property type="project" value="UniProtKB-UniRule"/>
</dbReference>
<dbReference type="GO" id="GO:0008653">
    <property type="term" value="P:lipopolysaccharide metabolic process"/>
    <property type="evidence" value="ECO:0007669"/>
    <property type="project" value="UniProtKB-UniRule"/>
</dbReference>
<dbReference type="CDD" id="cd07040">
    <property type="entry name" value="HP"/>
    <property type="match status" value="1"/>
</dbReference>
<dbReference type="Gene3D" id="3.40.50.1240">
    <property type="entry name" value="Phosphoglycerate mutase-like"/>
    <property type="match status" value="1"/>
</dbReference>
<dbReference type="HAMAP" id="MF_01868">
    <property type="entry name" value="Ais"/>
    <property type="match status" value="1"/>
</dbReference>
<dbReference type="InterPro" id="IPR013078">
    <property type="entry name" value="His_Pase_superF_clade-1"/>
</dbReference>
<dbReference type="InterPro" id="IPR029033">
    <property type="entry name" value="His_PPase_superfam"/>
</dbReference>
<dbReference type="InterPro" id="IPR011310">
    <property type="entry name" value="LipoPS_heptP_Pase"/>
</dbReference>
<dbReference type="NCBIfam" id="NF011945">
    <property type="entry name" value="PRK15416.1"/>
    <property type="match status" value="1"/>
</dbReference>
<dbReference type="Pfam" id="PF00300">
    <property type="entry name" value="His_Phos_1"/>
    <property type="match status" value="1"/>
</dbReference>
<dbReference type="PIRSF" id="PIRSF011416">
    <property type="entry name" value="Ais-TraG-AfrS"/>
    <property type="match status" value="1"/>
</dbReference>
<dbReference type="SUPFAM" id="SSF53254">
    <property type="entry name" value="Phosphoglycerate mutase-like"/>
    <property type="match status" value="1"/>
</dbReference>
<keyword id="KW-0378">Hydrolase</keyword>
<keyword id="KW-0574">Periplasm</keyword>
<keyword id="KW-1185">Reference proteome</keyword>
<keyword id="KW-0732">Signal</keyword>
<name>AIS_ECOL6</name>
<proteinExistence type="inferred from homology"/>